<protein>
    <recommendedName>
        <fullName evidence="1">Phosphoglucosamine mutase</fullName>
        <ecNumber evidence="1">5.4.2.10</ecNumber>
    </recommendedName>
</protein>
<evidence type="ECO:0000255" key="1">
    <source>
        <dbReference type="HAMAP-Rule" id="MF_01554"/>
    </source>
</evidence>
<proteinExistence type="inferred from homology"/>
<comment type="function">
    <text evidence="1">Catalyzes the conversion of glucosamine-6-phosphate to glucosamine-1-phosphate.</text>
</comment>
<comment type="catalytic activity">
    <reaction evidence="1">
        <text>alpha-D-glucosamine 1-phosphate = D-glucosamine 6-phosphate</text>
        <dbReference type="Rhea" id="RHEA:23424"/>
        <dbReference type="ChEBI" id="CHEBI:58516"/>
        <dbReference type="ChEBI" id="CHEBI:58725"/>
        <dbReference type="EC" id="5.4.2.10"/>
    </reaction>
</comment>
<comment type="cofactor">
    <cofactor evidence="1">
        <name>Mg(2+)</name>
        <dbReference type="ChEBI" id="CHEBI:18420"/>
    </cofactor>
    <text evidence="1">Binds 1 Mg(2+) ion per subunit.</text>
</comment>
<comment type="PTM">
    <text evidence="1">Activated by phosphorylation.</text>
</comment>
<comment type="similarity">
    <text evidence="1">Belongs to the phosphohexose mutase family.</text>
</comment>
<feature type="chain" id="PRO_1000201121" description="Phosphoglucosamine mutase">
    <location>
        <begin position="1"/>
        <end position="442"/>
    </location>
</feature>
<feature type="active site" description="Phosphoserine intermediate" evidence="1">
    <location>
        <position position="98"/>
    </location>
</feature>
<feature type="binding site" description="via phosphate group" evidence="1">
    <location>
        <position position="98"/>
    </location>
    <ligand>
        <name>Mg(2+)</name>
        <dbReference type="ChEBI" id="CHEBI:18420"/>
    </ligand>
</feature>
<feature type="binding site" evidence="1">
    <location>
        <position position="236"/>
    </location>
    <ligand>
        <name>Mg(2+)</name>
        <dbReference type="ChEBI" id="CHEBI:18420"/>
    </ligand>
</feature>
<feature type="binding site" evidence="1">
    <location>
        <position position="238"/>
    </location>
    <ligand>
        <name>Mg(2+)</name>
        <dbReference type="ChEBI" id="CHEBI:18420"/>
    </ligand>
</feature>
<feature type="binding site" evidence="1">
    <location>
        <position position="240"/>
    </location>
    <ligand>
        <name>Mg(2+)</name>
        <dbReference type="ChEBI" id="CHEBI:18420"/>
    </ligand>
</feature>
<feature type="modified residue" description="Phosphoserine" evidence="1">
    <location>
        <position position="98"/>
    </location>
</feature>
<reference key="1">
    <citation type="submission" date="2008-04" db="EMBL/GenBank/DDBJ databases">
        <title>Complete sequence of chromosome of Natranaerobius thermophilus JW/NM-WN-LF.</title>
        <authorList>
            <consortium name="US DOE Joint Genome Institute"/>
            <person name="Copeland A."/>
            <person name="Lucas S."/>
            <person name="Lapidus A."/>
            <person name="Glavina del Rio T."/>
            <person name="Dalin E."/>
            <person name="Tice H."/>
            <person name="Bruce D."/>
            <person name="Goodwin L."/>
            <person name="Pitluck S."/>
            <person name="Chertkov O."/>
            <person name="Brettin T."/>
            <person name="Detter J.C."/>
            <person name="Han C."/>
            <person name="Kuske C.R."/>
            <person name="Schmutz J."/>
            <person name="Larimer F."/>
            <person name="Land M."/>
            <person name="Hauser L."/>
            <person name="Kyrpides N."/>
            <person name="Lykidis A."/>
            <person name="Mesbah N.M."/>
            <person name="Wiegel J."/>
        </authorList>
    </citation>
    <scope>NUCLEOTIDE SEQUENCE [LARGE SCALE GENOMIC DNA]</scope>
    <source>
        <strain>ATCC BAA-1301 / DSM 18059 / JW/NM-WN-LF</strain>
    </source>
</reference>
<sequence length="442" mass="48032">MPKLFGTDGVRGVANEDLTPELCLKIGRAAGEYLKSYGDTVLVGRDTRLSGTMLEAALSAGLASVGLKVERLGIVTTPAVAFLASREDVAGGAMISASHNPVPDNGVKFFDNKGYKLAESHEEQIENYLEKELSRPTGTDIGKVLPENNKLIENYIQELIDKYPLDLSNYKIVLDCAYGATYQIAPRLFKKLGAEIIPLHAENRGEKINVECGSTNPELTSRTVVEEGADLGFSFDGDGDRIIALDEEGNQVNGDKIMAILAKDMKSRGELKNDKLIATVMSNLGLKLALKELGIALEETKVGDRNVLNRMREQDCVLGGEQSGHIINLQDNTTGDGVLTGLKLMKVLIDTGQSLKQLASIMEELPQLLVNVKVSNKDSAINSQKVQEEKSKVEKQLGSKGRVLIRPSGTEPVIRVMVEGENRETLHEVANHLTQVIKKAAE</sequence>
<gene>
    <name evidence="1" type="primary">glmM</name>
    <name type="ordered locus">Nther_0242</name>
</gene>
<name>GLMM_NATTJ</name>
<keyword id="KW-0413">Isomerase</keyword>
<keyword id="KW-0460">Magnesium</keyword>
<keyword id="KW-0479">Metal-binding</keyword>
<keyword id="KW-0597">Phosphoprotein</keyword>
<keyword id="KW-1185">Reference proteome</keyword>
<dbReference type="EC" id="5.4.2.10" evidence="1"/>
<dbReference type="EMBL" id="CP001034">
    <property type="protein sequence ID" value="ACB83841.1"/>
    <property type="molecule type" value="Genomic_DNA"/>
</dbReference>
<dbReference type="RefSeq" id="WP_012446730.1">
    <property type="nucleotide sequence ID" value="NC_010718.1"/>
</dbReference>
<dbReference type="SMR" id="B2A4R9"/>
<dbReference type="FunCoup" id="B2A4R9">
    <property type="interactions" value="424"/>
</dbReference>
<dbReference type="STRING" id="457570.Nther_0242"/>
<dbReference type="KEGG" id="nth:Nther_0242"/>
<dbReference type="eggNOG" id="COG1109">
    <property type="taxonomic scope" value="Bacteria"/>
</dbReference>
<dbReference type="HOGENOM" id="CLU_016950_7_0_9"/>
<dbReference type="InParanoid" id="B2A4R9"/>
<dbReference type="OrthoDB" id="9806956at2"/>
<dbReference type="Proteomes" id="UP000001683">
    <property type="component" value="Chromosome"/>
</dbReference>
<dbReference type="GO" id="GO:0005829">
    <property type="term" value="C:cytosol"/>
    <property type="evidence" value="ECO:0007669"/>
    <property type="project" value="TreeGrafter"/>
</dbReference>
<dbReference type="GO" id="GO:0000287">
    <property type="term" value="F:magnesium ion binding"/>
    <property type="evidence" value="ECO:0007669"/>
    <property type="project" value="UniProtKB-UniRule"/>
</dbReference>
<dbReference type="GO" id="GO:0008966">
    <property type="term" value="F:phosphoglucosamine mutase activity"/>
    <property type="evidence" value="ECO:0007669"/>
    <property type="project" value="UniProtKB-UniRule"/>
</dbReference>
<dbReference type="GO" id="GO:0004615">
    <property type="term" value="F:phosphomannomutase activity"/>
    <property type="evidence" value="ECO:0007669"/>
    <property type="project" value="TreeGrafter"/>
</dbReference>
<dbReference type="GO" id="GO:0005975">
    <property type="term" value="P:carbohydrate metabolic process"/>
    <property type="evidence" value="ECO:0007669"/>
    <property type="project" value="InterPro"/>
</dbReference>
<dbReference type="GO" id="GO:0009252">
    <property type="term" value="P:peptidoglycan biosynthetic process"/>
    <property type="evidence" value="ECO:0007669"/>
    <property type="project" value="TreeGrafter"/>
</dbReference>
<dbReference type="GO" id="GO:0006048">
    <property type="term" value="P:UDP-N-acetylglucosamine biosynthetic process"/>
    <property type="evidence" value="ECO:0007669"/>
    <property type="project" value="TreeGrafter"/>
</dbReference>
<dbReference type="CDD" id="cd05802">
    <property type="entry name" value="GlmM"/>
    <property type="match status" value="1"/>
</dbReference>
<dbReference type="FunFam" id="3.30.310.50:FF:000001">
    <property type="entry name" value="Phosphoglucosamine mutase"/>
    <property type="match status" value="1"/>
</dbReference>
<dbReference type="FunFam" id="3.40.120.10:FF:000001">
    <property type="entry name" value="Phosphoglucosamine mutase"/>
    <property type="match status" value="1"/>
</dbReference>
<dbReference type="FunFam" id="3.40.120.10:FF:000002">
    <property type="entry name" value="Phosphoglucosamine mutase"/>
    <property type="match status" value="1"/>
</dbReference>
<dbReference type="Gene3D" id="3.40.120.10">
    <property type="entry name" value="Alpha-D-Glucose-1,6-Bisphosphate, subunit A, domain 3"/>
    <property type="match status" value="3"/>
</dbReference>
<dbReference type="Gene3D" id="3.30.310.50">
    <property type="entry name" value="Alpha-D-phosphohexomutase, C-terminal domain"/>
    <property type="match status" value="1"/>
</dbReference>
<dbReference type="HAMAP" id="MF_01554_B">
    <property type="entry name" value="GlmM_B"/>
    <property type="match status" value="1"/>
</dbReference>
<dbReference type="InterPro" id="IPR005844">
    <property type="entry name" value="A-D-PHexomutase_a/b/a-I"/>
</dbReference>
<dbReference type="InterPro" id="IPR016055">
    <property type="entry name" value="A-D-PHexomutase_a/b/a-I/II/III"/>
</dbReference>
<dbReference type="InterPro" id="IPR005845">
    <property type="entry name" value="A-D-PHexomutase_a/b/a-II"/>
</dbReference>
<dbReference type="InterPro" id="IPR005846">
    <property type="entry name" value="A-D-PHexomutase_a/b/a-III"/>
</dbReference>
<dbReference type="InterPro" id="IPR005843">
    <property type="entry name" value="A-D-PHexomutase_C"/>
</dbReference>
<dbReference type="InterPro" id="IPR036900">
    <property type="entry name" value="A-D-PHexomutase_C_sf"/>
</dbReference>
<dbReference type="InterPro" id="IPR005841">
    <property type="entry name" value="Alpha-D-phosphohexomutase_SF"/>
</dbReference>
<dbReference type="InterPro" id="IPR006352">
    <property type="entry name" value="GlmM_bact"/>
</dbReference>
<dbReference type="InterPro" id="IPR050060">
    <property type="entry name" value="Phosphoglucosamine_mutase"/>
</dbReference>
<dbReference type="NCBIfam" id="TIGR01455">
    <property type="entry name" value="glmM"/>
    <property type="match status" value="1"/>
</dbReference>
<dbReference type="NCBIfam" id="NF008139">
    <property type="entry name" value="PRK10887.1"/>
    <property type="match status" value="1"/>
</dbReference>
<dbReference type="PANTHER" id="PTHR42946:SF1">
    <property type="entry name" value="PHOSPHOGLUCOMUTASE (ALPHA-D-GLUCOSE-1,6-BISPHOSPHATE-DEPENDENT)"/>
    <property type="match status" value="1"/>
</dbReference>
<dbReference type="PANTHER" id="PTHR42946">
    <property type="entry name" value="PHOSPHOHEXOSE MUTASE"/>
    <property type="match status" value="1"/>
</dbReference>
<dbReference type="Pfam" id="PF02878">
    <property type="entry name" value="PGM_PMM_I"/>
    <property type="match status" value="1"/>
</dbReference>
<dbReference type="Pfam" id="PF02879">
    <property type="entry name" value="PGM_PMM_II"/>
    <property type="match status" value="1"/>
</dbReference>
<dbReference type="Pfam" id="PF02880">
    <property type="entry name" value="PGM_PMM_III"/>
    <property type="match status" value="1"/>
</dbReference>
<dbReference type="Pfam" id="PF00408">
    <property type="entry name" value="PGM_PMM_IV"/>
    <property type="match status" value="1"/>
</dbReference>
<dbReference type="PRINTS" id="PR00509">
    <property type="entry name" value="PGMPMM"/>
</dbReference>
<dbReference type="SUPFAM" id="SSF55957">
    <property type="entry name" value="Phosphoglucomutase, C-terminal domain"/>
    <property type="match status" value="1"/>
</dbReference>
<dbReference type="SUPFAM" id="SSF53738">
    <property type="entry name" value="Phosphoglucomutase, first 3 domains"/>
    <property type="match status" value="3"/>
</dbReference>
<organism>
    <name type="scientific">Natranaerobius thermophilus (strain ATCC BAA-1301 / DSM 18059 / JW/NM-WN-LF)</name>
    <dbReference type="NCBI Taxonomy" id="457570"/>
    <lineage>
        <taxon>Bacteria</taxon>
        <taxon>Bacillati</taxon>
        <taxon>Bacillota</taxon>
        <taxon>Clostridia</taxon>
        <taxon>Natranaerobiales</taxon>
        <taxon>Natranaerobiaceae</taxon>
        <taxon>Natranaerobius</taxon>
    </lineage>
</organism>
<accession>B2A4R9</accession>